<evidence type="ECO:0000250" key="1">
    <source>
        <dbReference type="UniProtKB" id="Q8N3R9"/>
    </source>
</evidence>
<evidence type="ECO:0000250" key="2">
    <source>
        <dbReference type="UniProtKB" id="Q9JLB2"/>
    </source>
</evidence>
<evidence type="ECO:0000255" key="3">
    <source>
        <dbReference type="PROSITE-ProRule" id="PRU00100"/>
    </source>
</evidence>
<evidence type="ECO:0000255" key="4">
    <source>
        <dbReference type="PROSITE-ProRule" id="PRU00143"/>
    </source>
</evidence>
<evidence type="ECO:0000255" key="5">
    <source>
        <dbReference type="PROSITE-ProRule" id="PRU00192"/>
    </source>
</evidence>
<evidence type="ECO:0000255" key="6">
    <source>
        <dbReference type="PROSITE-ProRule" id="PRU00365"/>
    </source>
</evidence>
<evidence type="ECO:0000256" key="7">
    <source>
        <dbReference type="SAM" id="MobiDB-lite"/>
    </source>
</evidence>
<evidence type="ECO:0000269" key="8">
    <source>
    </source>
</evidence>
<evidence type="ECO:0000269" key="9">
    <source>
    </source>
</evidence>
<evidence type="ECO:0000303" key="10">
    <source>
    </source>
</evidence>
<evidence type="ECO:0000303" key="11">
    <source>
    </source>
</evidence>
<evidence type="ECO:0000305" key="12"/>
<sequence length="677" mass="76408">MTTSHMNGYVTESDGGGGTDIVEEGVQRHREMAVDCPSELGARTLPVRRSAQLEKIRQQQEDRRRREEEGRSRQELDLNSSMRLKKLSQNPKVGIDNPTFEQMEGPGGSAGGLQSLIAPPALLELEDLLMSLKQVQHSLNDSQSQEDVELVLQLVQKPDFQKAFSIHNSVAHYMNRPSPPYPLTDHAQTLAQEVEVMVQNSSHKEGLELSSLLSTSHMQALMMAHDSVAEQEMQLEPLVPSVNASETLTQWGGETVKIVRIEKAKDIPLGATVRNDMDSVVISRIVKGGAAERSGLLHEGDEILEINGVEIRGKDVNEVFDILADMHGVLSFVLIPSAQIKSPPIKETVVHVKAHFDYDPSDDPYVPCRELGLCFQKGDILHIISQDDPNWWQAYRDGDEDNQPLAGLVPGKSFQQQREAMKQTIEEDKEPEKTGKLWCAKKTKKKRKKMQYNANKNDDFDNEEILTYEEMALYHQPANRKRPIALIGPPNCGQNELRQRLLSTEPDRFAGPVPHTTRSRRDAEANGRDYHFVSRQAFEMDSAAGKFIESGEFEKNFYGTSTDSVRQVINTGKICLLCVHTQSLKVLRSSDLKPYIIFIAPPSQERLRALLAKDNKNPKPEELRDIIEKAREMEQNYGHLFDAAIVNTDLDKSYQELLRLINKLDTEPQWVPSSWLR</sequence>
<accession>Q8JHF4</accession>
<feature type="chain" id="PRO_0000094583" description="Protein PALS1">
    <location>
        <begin position="1"/>
        <end position="677"/>
    </location>
</feature>
<feature type="domain" description="L27 1" evidence="6">
    <location>
        <begin position="121"/>
        <end position="178"/>
    </location>
</feature>
<feature type="domain" description="L27 2" evidence="6">
    <location>
        <begin position="180"/>
        <end position="236"/>
    </location>
</feature>
<feature type="domain" description="PDZ" evidence="4">
    <location>
        <begin position="258"/>
        <end position="338"/>
    </location>
</feature>
<feature type="domain" description="SH3" evidence="5">
    <location>
        <begin position="347"/>
        <end position="419"/>
    </location>
</feature>
<feature type="domain" description="Guanylate kinase-like" evidence="3">
    <location>
        <begin position="481"/>
        <end position="662"/>
    </location>
</feature>
<feature type="region of interest" description="Required for the correct localization of PALS1 and PATJ at cell-cell contacts and the normal formation of tight junctions and adherens junctions" evidence="2">
    <location>
        <begin position="1"/>
        <end position="347"/>
    </location>
</feature>
<feature type="region of interest" description="Disordered" evidence="7">
    <location>
        <begin position="39"/>
        <end position="81"/>
    </location>
</feature>
<feature type="region of interest" description="Disordered" evidence="7">
    <location>
        <begin position="506"/>
        <end position="526"/>
    </location>
</feature>
<feature type="compositionally biased region" description="Basic and acidic residues" evidence="7">
    <location>
        <begin position="51"/>
        <end position="76"/>
    </location>
</feature>
<feature type="binding site" evidence="3">
    <location>
        <begin position="488"/>
        <end position="495"/>
    </location>
    <ligand>
        <name>ATP</name>
        <dbReference type="ChEBI" id="CHEBI:30616"/>
    </ligand>
</feature>
<feature type="mutagenesis site" description="In m227; recessive, larval lethal/Disrupts all retinal layers." evidence="8">
    <original>I</original>
    <variation>D</variation>
    <location>
        <position position="303"/>
    </location>
</feature>
<protein>
    <recommendedName>
        <fullName>Protein PALS1</fullName>
    </recommendedName>
    <alternativeName>
        <fullName>MAGUK family factor</fullName>
    </alternativeName>
    <alternativeName>
        <fullName>MAGUK p55 subfamily member 5-A</fullName>
    </alternativeName>
    <alternativeName>
        <fullName evidence="10">Nagie oko protein</fullName>
    </alternativeName>
    <alternativeName>
        <fullName>Protein associated with Lin-7 1</fullName>
    </alternativeName>
</protein>
<keyword id="KW-0067">ATP-binding</keyword>
<keyword id="KW-0965">Cell junction</keyword>
<keyword id="KW-1003">Cell membrane</keyword>
<keyword id="KW-0472">Membrane</keyword>
<keyword id="KW-0547">Nucleotide-binding</keyword>
<keyword id="KW-1185">Reference proteome</keyword>
<keyword id="KW-0677">Repeat</keyword>
<keyword id="KW-0728">SH3 domain</keyword>
<keyword id="KW-0796">Tight junction</keyword>
<gene>
    <name type="primary">pals1a</name>
    <name evidence="11" type="synonym">mpp5</name>
    <name type="synonym">mpp5a</name>
    <name evidence="11" type="synonym">nok</name>
</gene>
<proteinExistence type="evidence at protein level"/>
<dbReference type="EMBL" id="AF510111">
    <property type="protein sequence ID" value="AAM77880.1"/>
    <property type="status" value="ALT_INIT"/>
    <property type="molecule type" value="mRNA"/>
</dbReference>
<dbReference type="RefSeq" id="NP_919344.1">
    <property type="nucleotide sequence ID" value="NM_194363.1"/>
</dbReference>
<dbReference type="SMR" id="Q8JHF4"/>
<dbReference type="FunCoup" id="Q8JHF4">
    <property type="interactions" value="769"/>
</dbReference>
<dbReference type="STRING" id="7955.ENSDARP00000123304"/>
<dbReference type="PaxDb" id="7955-ENSDARP00000078936"/>
<dbReference type="GeneID" id="252845"/>
<dbReference type="KEGG" id="dre:252845"/>
<dbReference type="AGR" id="ZFIN:ZDB-GENE-020712-1"/>
<dbReference type="CTD" id="252845"/>
<dbReference type="ZFIN" id="ZDB-GENE-020712-1">
    <property type="gene designation" value="pals1a"/>
</dbReference>
<dbReference type="eggNOG" id="KOG0609">
    <property type="taxonomic scope" value="Eukaryota"/>
</dbReference>
<dbReference type="InParanoid" id="Q8JHF4"/>
<dbReference type="OrthoDB" id="43580at2759"/>
<dbReference type="PRO" id="PR:Q8JHF4"/>
<dbReference type="Proteomes" id="UP000000437">
    <property type="component" value="Chromosome 17"/>
</dbReference>
<dbReference type="GO" id="GO:0005912">
    <property type="term" value="C:adherens junction"/>
    <property type="evidence" value="ECO:0000250"/>
    <property type="project" value="UniProtKB"/>
</dbReference>
<dbReference type="GO" id="GO:0043296">
    <property type="term" value="C:apical junction complex"/>
    <property type="evidence" value="ECO:0000314"/>
    <property type="project" value="ZFIN"/>
</dbReference>
<dbReference type="GO" id="GO:0016324">
    <property type="term" value="C:apical plasma membrane"/>
    <property type="evidence" value="ECO:0007669"/>
    <property type="project" value="UniProtKB-SubCell"/>
</dbReference>
<dbReference type="GO" id="GO:0005923">
    <property type="term" value="C:bicellular tight junction"/>
    <property type="evidence" value="ECO:0007669"/>
    <property type="project" value="UniProtKB-SubCell"/>
</dbReference>
<dbReference type="GO" id="GO:0005634">
    <property type="term" value="C:nucleus"/>
    <property type="evidence" value="ECO:0000314"/>
    <property type="project" value="ZFIN"/>
</dbReference>
<dbReference type="GO" id="GO:0001917">
    <property type="term" value="C:photoreceptor inner segment"/>
    <property type="evidence" value="ECO:0000314"/>
    <property type="project" value="ZFIN"/>
</dbReference>
<dbReference type="GO" id="GO:0005886">
    <property type="term" value="C:plasma membrane"/>
    <property type="evidence" value="ECO:0000314"/>
    <property type="project" value="ZFIN"/>
</dbReference>
<dbReference type="GO" id="GO:0005524">
    <property type="term" value="F:ATP binding"/>
    <property type="evidence" value="ECO:0007669"/>
    <property type="project" value="UniProtKB-KW"/>
</dbReference>
<dbReference type="GO" id="GO:0045176">
    <property type="term" value="P:apical protein localization"/>
    <property type="evidence" value="ECO:0000316"/>
    <property type="project" value="ZFIN"/>
</dbReference>
<dbReference type="GO" id="GO:0007420">
    <property type="term" value="P:brain development"/>
    <property type="evidence" value="ECO:0000315"/>
    <property type="project" value="ZFIN"/>
</dbReference>
<dbReference type="GO" id="GO:0055008">
    <property type="term" value="P:cardiac muscle tissue morphogenesis"/>
    <property type="evidence" value="ECO:0000315"/>
    <property type="project" value="ZFIN"/>
</dbReference>
<dbReference type="GO" id="GO:0098609">
    <property type="term" value="P:cell-cell adhesion"/>
    <property type="evidence" value="ECO:0000315"/>
    <property type="project" value="ZFIN"/>
</dbReference>
<dbReference type="GO" id="GO:0021954">
    <property type="term" value="P:central nervous system neuron development"/>
    <property type="evidence" value="ECO:0000250"/>
    <property type="project" value="UniProtKB"/>
</dbReference>
<dbReference type="GO" id="GO:0021987">
    <property type="term" value="P:cerebral cortex development"/>
    <property type="evidence" value="ECO:0000250"/>
    <property type="project" value="UniProtKB"/>
</dbReference>
<dbReference type="GO" id="GO:0021744">
    <property type="term" value="P:dorsal motor nucleus of vagus nerve development"/>
    <property type="evidence" value="ECO:0000315"/>
    <property type="project" value="ZFIN"/>
</dbReference>
<dbReference type="GO" id="GO:0035050">
    <property type="term" value="P:embryonic heart tube development"/>
    <property type="evidence" value="ECO:0000315"/>
    <property type="project" value="ZFIN"/>
</dbReference>
<dbReference type="GO" id="GO:0060059">
    <property type="term" value="P:embryonic retina morphogenesis in camera-type eye"/>
    <property type="evidence" value="ECO:0000315"/>
    <property type="project" value="ZFIN"/>
</dbReference>
<dbReference type="GO" id="GO:0035088">
    <property type="term" value="P:establishment or maintenance of apical/basal cell polarity"/>
    <property type="evidence" value="ECO:0000315"/>
    <property type="project" value="ZFIN"/>
</dbReference>
<dbReference type="GO" id="GO:0045197">
    <property type="term" value="P:establishment or maintenance of epithelial cell apical/basal polarity"/>
    <property type="evidence" value="ECO:0000315"/>
    <property type="project" value="ZFIN"/>
</dbReference>
<dbReference type="GO" id="GO:0016332">
    <property type="term" value="P:establishment or maintenance of polarity of embryonic epithelium"/>
    <property type="evidence" value="ECO:0000315"/>
    <property type="project" value="ZFIN"/>
</dbReference>
<dbReference type="GO" id="GO:0048699">
    <property type="term" value="P:generation of neurons"/>
    <property type="evidence" value="ECO:0000315"/>
    <property type="project" value="ZFIN"/>
</dbReference>
<dbReference type="GO" id="GO:0045199">
    <property type="term" value="P:maintenance of epithelial cell apical/basal polarity"/>
    <property type="evidence" value="ECO:0000315"/>
    <property type="project" value="ZFIN"/>
</dbReference>
<dbReference type="GO" id="GO:0008078">
    <property type="term" value="P:mesodermal cell migration"/>
    <property type="evidence" value="ECO:0000315"/>
    <property type="project" value="ZFIN"/>
</dbReference>
<dbReference type="GO" id="GO:0002011">
    <property type="term" value="P:morphogenesis of an epithelial sheet"/>
    <property type="evidence" value="ECO:0000315"/>
    <property type="project" value="ZFIN"/>
</dbReference>
<dbReference type="GO" id="GO:0001841">
    <property type="term" value="P:neural tube formation"/>
    <property type="evidence" value="ECO:0000315"/>
    <property type="project" value="ZFIN"/>
</dbReference>
<dbReference type="GO" id="GO:0072659">
    <property type="term" value="P:protein localization to plasma membrane"/>
    <property type="evidence" value="ECO:0000318"/>
    <property type="project" value="GO_Central"/>
</dbReference>
<dbReference type="GO" id="GO:0060041">
    <property type="term" value="P:retina development in camera-type eye"/>
    <property type="evidence" value="ECO:0000315"/>
    <property type="project" value="ZFIN"/>
</dbReference>
<dbReference type="GO" id="GO:0060042">
    <property type="term" value="P:retina morphogenesis in camera-type eye"/>
    <property type="evidence" value="ECO:0000315"/>
    <property type="project" value="ZFIN"/>
</dbReference>
<dbReference type="GO" id="GO:0021591">
    <property type="term" value="P:ventricular system development"/>
    <property type="evidence" value="ECO:0000315"/>
    <property type="project" value="ZFIN"/>
</dbReference>
<dbReference type="CDD" id="cd00071">
    <property type="entry name" value="GMPK"/>
    <property type="match status" value="1"/>
</dbReference>
<dbReference type="CDD" id="cd06798">
    <property type="entry name" value="PDZ_MPP5-like"/>
    <property type="match status" value="1"/>
</dbReference>
<dbReference type="CDD" id="cd12036">
    <property type="entry name" value="SH3_MPP5"/>
    <property type="match status" value="1"/>
</dbReference>
<dbReference type="FunFam" id="3.30.63.10:FF:000002">
    <property type="entry name" value="Guanylate kinase 1"/>
    <property type="match status" value="1"/>
</dbReference>
<dbReference type="FunFam" id="2.30.30.40:FF:000105">
    <property type="entry name" value="MAGUK p55 subfamily member 5"/>
    <property type="match status" value="1"/>
</dbReference>
<dbReference type="FunFam" id="2.30.42.10:FF:000088">
    <property type="entry name" value="MAGUK p55 subfamily member 5"/>
    <property type="match status" value="1"/>
</dbReference>
<dbReference type="FunFam" id="3.40.50.300:FF:000469">
    <property type="entry name" value="MAGUK p55 subfamily member 5"/>
    <property type="match status" value="1"/>
</dbReference>
<dbReference type="Gene3D" id="1.20.1440.360">
    <property type="match status" value="1"/>
</dbReference>
<dbReference type="Gene3D" id="2.30.42.10">
    <property type="match status" value="1"/>
</dbReference>
<dbReference type="Gene3D" id="1.10.287.650">
    <property type="entry name" value="L27 domain"/>
    <property type="match status" value="1"/>
</dbReference>
<dbReference type="Gene3D" id="3.40.50.300">
    <property type="entry name" value="P-loop containing nucleotide triphosphate hydrolases"/>
    <property type="match status" value="1"/>
</dbReference>
<dbReference type="Gene3D" id="2.30.30.40">
    <property type="entry name" value="SH3 Domains"/>
    <property type="match status" value="1"/>
</dbReference>
<dbReference type="InterPro" id="IPR008145">
    <property type="entry name" value="GK/Ca_channel_bsu"/>
</dbReference>
<dbReference type="InterPro" id="IPR008144">
    <property type="entry name" value="Guanylate_kin-like_dom"/>
</dbReference>
<dbReference type="InterPro" id="IPR020590">
    <property type="entry name" value="Guanylate_kinase_CS"/>
</dbReference>
<dbReference type="InterPro" id="IPR014775">
    <property type="entry name" value="L27_C"/>
</dbReference>
<dbReference type="InterPro" id="IPR004172">
    <property type="entry name" value="L27_dom"/>
</dbReference>
<dbReference type="InterPro" id="IPR036892">
    <property type="entry name" value="L27_dom_sf"/>
</dbReference>
<dbReference type="InterPro" id="IPR015145">
    <property type="entry name" value="L27_N"/>
</dbReference>
<dbReference type="InterPro" id="IPR050716">
    <property type="entry name" value="MAGUK"/>
</dbReference>
<dbReference type="InterPro" id="IPR035601">
    <property type="entry name" value="MPP5_SH3"/>
</dbReference>
<dbReference type="InterPro" id="IPR027417">
    <property type="entry name" value="P-loop_NTPase"/>
</dbReference>
<dbReference type="InterPro" id="IPR001478">
    <property type="entry name" value="PDZ"/>
</dbReference>
<dbReference type="InterPro" id="IPR036034">
    <property type="entry name" value="PDZ_sf"/>
</dbReference>
<dbReference type="InterPro" id="IPR036028">
    <property type="entry name" value="SH3-like_dom_sf"/>
</dbReference>
<dbReference type="InterPro" id="IPR001452">
    <property type="entry name" value="SH3_domain"/>
</dbReference>
<dbReference type="PANTHER" id="PTHR23122">
    <property type="entry name" value="MEMBRANE-ASSOCIATED GUANYLATE KINASE MAGUK"/>
    <property type="match status" value="1"/>
</dbReference>
<dbReference type="Pfam" id="PF00625">
    <property type="entry name" value="Guanylate_kin"/>
    <property type="match status" value="1"/>
</dbReference>
<dbReference type="Pfam" id="PF02828">
    <property type="entry name" value="L27"/>
    <property type="match status" value="1"/>
</dbReference>
<dbReference type="Pfam" id="PF09060">
    <property type="entry name" value="L27_N"/>
    <property type="match status" value="1"/>
</dbReference>
<dbReference type="Pfam" id="PF00595">
    <property type="entry name" value="PDZ"/>
    <property type="match status" value="1"/>
</dbReference>
<dbReference type="Pfam" id="PF07653">
    <property type="entry name" value="SH3_2"/>
    <property type="match status" value="1"/>
</dbReference>
<dbReference type="SMART" id="SM00072">
    <property type="entry name" value="GuKc"/>
    <property type="match status" value="1"/>
</dbReference>
<dbReference type="SMART" id="SM00569">
    <property type="entry name" value="L27"/>
    <property type="match status" value="2"/>
</dbReference>
<dbReference type="SMART" id="SM00228">
    <property type="entry name" value="PDZ"/>
    <property type="match status" value="1"/>
</dbReference>
<dbReference type="SMART" id="SM00326">
    <property type="entry name" value="SH3"/>
    <property type="match status" value="1"/>
</dbReference>
<dbReference type="SUPFAM" id="SSF101288">
    <property type="entry name" value="L27 domain"/>
    <property type="match status" value="2"/>
</dbReference>
<dbReference type="SUPFAM" id="SSF52540">
    <property type="entry name" value="P-loop containing nucleoside triphosphate hydrolases"/>
    <property type="match status" value="1"/>
</dbReference>
<dbReference type="SUPFAM" id="SSF50156">
    <property type="entry name" value="PDZ domain-like"/>
    <property type="match status" value="1"/>
</dbReference>
<dbReference type="SUPFAM" id="SSF50044">
    <property type="entry name" value="SH3-domain"/>
    <property type="match status" value="1"/>
</dbReference>
<dbReference type="PROSITE" id="PS00856">
    <property type="entry name" value="GUANYLATE_KINASE_1"/>
    <property type="match status" value="1"/>
</dbReference>
<dbReference type="PROSITE" id="PS50052">
    <property type="entry name" value="GUANYLATE_KINASE_2"/>
    <property type="match status" value="1"/>
</dbReference>
<dbReference type="PROSITE" id="PS51022">
    <property type="entry name" value="L27"/>
    <property type="match status" value="2"/>
</dbReference>
<dbReference type="PROSITE" id="PS50106">
    <property type="entry name" value="PDZ"/>
    <property type="match status" value="1"/>
</dbReference>
<dbReference type="PROSITE" id="PS50002">
    <property type="entry name" value="SH3"/>
    <property type="match status" value="1"/>
</dbReference>
<organism>
    <name type="scientific">Danio rerio</name>
    <name type="common">Zebrafish</name>
    <name type="synonym">Brachydanio rerio</name>
    <dbReference type="NCBI Taxonomy" id="7955"/>
    <lineage>
        <taxon>Eukaryota</taxon>
        <taxon>Metazoa</taxon>
        <taxon>Chordata</taxon>
        <taxon>Craniata</taxon>
        <taxon>Vertebrata</taxon>
        <taxon>Euteleostomi</taxon>
        <taxon>Actinopterygii</taxon>
        <taxon>Neopterygii</taxon>
        <taxon>Teleostei</taxon>
        <taxon>Ostariophysi</taxon>
        <taxon>Cypriniformes</taxon>
        <taxon>Danionidae</taxon>
        <taxon>Danioninae</taxon>
        <taxon>Danio</taxon>
    </lineage>
</organism>
<reference key="1">
    <citation type="journal article" date="2002" name="Nat. Genet.">
        <title>nagie oko, encoding a MAGUK-family protein, is essential for cellular patterning of the retina.</title>
        <authorList>
            <person name="Wei X."/>
            <person name="Malicki J."/>
        </authorList>
    </citation>
    <scope>NUCLEOTIDE SEQUENCE [MRNA]</scope>
    <scope>FUNCTION</scope>
    <scope>SUBCELLULAR LOCATION</scope>
    <scope>TISSUE SPECIFICITY</scope>
    <scope>DEVELOPMENTAL STAGE</scope>
    <scope>DOMAIN</scope>
    <scope>MUTAGENESIS OF ILE-303</scope>
    <source>
        <tissue>Embryo</tissue>
    </source>
</reference>
<reference key="2">
    <citation type="journal article" date="2006" name="Development">
        <title>Heart and soul/PRKCi and nagie oko/Mpp5 regulate myocardial coherence and remodeling during cardiac morphogenesis.</title>
        <authorList>
            <person name="Rohr S."/>
            <person name="Bit-Avragim N."/>
            <person name="Abdelilah-Seyfried S."/>
        </authorList>
    </citation>
    <scope>FUNCTION</scope>
    <scope>DISRUPTION PHENOTYPE</scope>
</reference>
<name>PAL1A_DANRE</name>
<comment type="function">
    <text evidence="1 8 9">Plays a role in tight junction biogenesis and in the establishment of cell polarity in epithelial cells (By similarity). Also involved in adherens junction biogenesis (PubMed:11992120, PubMed:16319113). Required for polarized epithelial organization, cell-cell adhesion and remodeling of myocardial cells during heart tube elongation during embryogenesis (PubMed:16319113). Functions in cellular patterning of the retina and development of the retinal pigmented epithelium (PubMed:11992120, PubMed:16319113). Also required for embryo body axis specification (PubMed:16319113).</text>
</comment>
<comment type="subcellular location">
    <subcellularLocation>
        <location evidence="8">Apical cell membrane</location>
        <topology evidence="8">Peripheral membrane protein</topology>
    </subcellularLocation>
    <subcellularLocation>
        <location evidence="8">Cell junction</location>
        <location evidence="8">Tight junction</location>
    </subcellularLocation>
    <text>Localizes to the apical region of the cell membrane, in the vicinity of junctional complexes in the neuroepithelium and the photoreceptor layer. Enriched in the areas immediately apical to the adherens junctions-associated actin bundles.</text>
</comment>
<comment type="tissue specificity">
    <text evidence="8">Expressed in the retina and in the neural tube.</text>
</comment>
<comment type="developmental stage">
    <text evidence="8">Expressed early in development.</text>
</comment>
<comment type="domain">
    <text evidence="8">The PDZ domain is required for apical location.</text>
</comment>
<comment type="disruption phenotype">
    <text evidence="9">Morpholino knockdown embryos show disrupted epithelium organization and cell-cell junctions of the myocardium at the 16 somite stage (PubMed:16319113). Loss of myocardial sheet coherence and heart cone fusion at the 20 to 28 somite stage (PubMed:16319113). Reduced extension and an increase in cell density of ventricular myocardial cells resulting in defects in remodeling of myocardial cells during heart tube elongation at 36 hpf (PubMed:16319113).</text>
</comment>
<comment type="similarity">
    <text evidence="12">Belongs to the MAGUK family.</text>
</comment>
<comment type="sequence caution" evidence="12">
    <conflict type="erroneous initiation">
        <sequence resource="EMBL-CDS" id="AAM77880"/>
    </conflict>
</comment>